<dbReference type="EC" id="2.8.1.7" evidence="1"/>
<dbReference type="EC" id="4.4.1.16" evidence="1"/>
<dbReference type="EMBL" id="FM180568">
    <property type="protein sequence ID" value="CAS09313.1"/>
    <property type="molecule type" value="Genomic_DNA"/>
</dbReference>
<dbReference type="RefSeq" id="WP_000144571.1">
    <property type="nucleotide sequence ID" value="NC_011601.1"/>
</dbReference>
<dbReference type="SMR" id="B7US19"/>
<dbReference type="KEGG" id="ecg:E2348C_1765"/>
<dbReference type="HOGENOM" id="CLU_003433_2_5_6"/>
<dbReference type="UniPathway" id="UPA00266"/>
<dbReference type="Proteomes" id="UP000008205">
    <property type="component" value="Chromosome"/>
</dbReference>
<dbReference type="GO" id="GO:0005737">
    <property type="term" value="C:cytoplasm"/>
    <property type="evidence" value="ECO:0007669"/>
    <property type="project" value="UniProtKB-SubCell"/>
</dbReference>
<dbReference type="GO" id="GO:0031071">
    <property type="term" value="F:cysteine desulfurase activity"/>
    <property type="evidence" value="ECO:0007669"/>
    <property type="project" value="UniProtKB-UniRule"/>
</dbReference>
<dbReference type="GO" id="GO:0030170">
    <property type="term" value="F:pyridoxal phosphate binding"/>
    <property type="evidence" value="ECO:0007669"/>
    <property type="project" value="InterPro"/>
</dbReference>
<dbReference type="GO" id="GO:0009000">
    <property type="term" value="F:selenocysteine lyase activity"/>
    <property type="evidence" value="ECO:0007669"/>
    <property type="project" value="UniProtKB-UniRule"/>
</dbReference>
<dbReference type="GO" id="GO:0006534">
    <property type="term" value="P:cysteine metabolic process"/>
    <property type="evidence" value="ECO:0007669"/>
    <property type="project" value="InterPro"/>
</dbReference>
<dbReference type="CDD" id="cd06453">
    <property type="entry name" value="SufS_like"/>
    <property type="match status" value="1"/>
</dbReference>
<dbReference type="FunFam" id="3.40.640.10:FF:000042">
    <property type="entry name" value="Cysteine desulfurase"/>
    <property type="match status" value="1"/>
</dbReference>
<dbReference type="Gene3D" id="3.90.1150.10">
    <property type="entry name" value="Aspartate Aminotransferase, domain 1"/>
    <property type="match status" value="1"/>
</dbReference>
<dbReference type="Gene3D" id="3.40.640.10">
    <property type="entry name" value="Type I PLP-dependent aspartate aminotransferase-like (Major domain)"/>
    <property type="match status" value="1"/>
</dbReference>
<dbReference type="HAMAP" id="MF_01831">
    <property type="entry name" value="SufS_aminotrans_5"/>
    <property type="match status" value="1"/>
</dbReference>
<dbReference type="InterPro" id="IPR000192">
    <property type="entry name" value="Aminotrans_V_dom"/>
</dbReference>
<dbReference type="InterPro" id="IPR020578">
    <property type="entry name" value="Aminotrans_V_PyrdxlP_BS"/>
</dbReference>
<dbReference type="InterPro" id="IPR010970">
    <property type="entry name" value="Cys_dSase_SufS"/>
</dbReference>
<dbReference type="InterPro" id="IPR015424">
    <property type="entry name" value="PyrdxlP-dep_Trfase"/>
</dbReference>
<dbReference type="InterPro" id="IPR015421">
    <property type="entry name" value="PyrdxlP-dep_Trfase_major"/>
</dbReference>
<dbReference type="InterPro" id="IPR015422">
    <property type="entry name" value="PyrdxlP-dep_Trfase_small"/>
</dbReference>
<dbReference type="NCBIfam" id="NF006791">
    <property type="entry name" value="PRK09295.1"/>
    <property type="match status" value="1"/>
</dbReference>
<dbReference type="NCBIfam" id="TIGR01979">
    <property type="entry name" value="sufS"/>
    <property type="match status" value="1"/>
</dbReference>
<dbReference type="PANTHER" id="PTHR43586">
    <property type="entry name" value="CYSTEINE DESULFURASE"/>
    <property type="match status" value="1"/>
</dbReference>
<dbReference type="PANTHER" id="PTHR43586:SF25">
    <property type="entry name" value="CYSTEINE DESULFURASE"/>
    <property type="match status" value="1"/>
</dbReference>
<dbReference type="Pfam" id="PF00266">
    <property type="entry name" value="Aminotran_5"/>
    <property type="match status" value="1"/>
</dbReference>
<dbReference type="SUPFAM" id="SSF53383">
    <property type="entry name" value="PLP-dependent transferases"/>
    <property type="match status" value="1"/>
</dbReference>
<dbReference type="PROSITE" id="PS00595">
    <property type="entry name" value="AA_TRANSFER_CLASS_5"/>
    <property type="match status" value="1"/>
</dbReference>
<name>SUFS_ECO27</name>
<proteinExistence type="inferred from homology"/>
<reference key="1">
    <citation type="journal article" date="2009" name="J. Bacteriol.">
        <title>Complete genome sequence and comparative genome analysis of enteropathogenic Escherichia coli O127:H6 strain E2348/69.</title>
        <authorList>
            <person name="Iguchi A."/>
            <person name="Thomson N.R."/>
            <person name="Ogura Y."/>
            <person name="Saunders D."/>
            <person name="Ooka T."/>
            <person name="Henderson I.R."/>
            <person name="Harris D."/>
            <person name="Asadulghani M."/>
            <person name="Kurokawa K."/>
            <person name="Dean P."/>
            <person name="Kenny B."/>
            <person name="Quail M.A."/>
            <person name="Thurston S."/>
            <person name="Dougan G."/>
            <person name="Hayashi T."/>
            <person name="Parkhill J."/>
            <person name="Frankel G."/>
        </authorList>
    </citation>
    <scope>NUCLEOTIDE SEQUENCE [LARGE SCALE GENOMIC DNA]</scope>
    <source>
        <strain>E2348/69 / EPEC</strain>
    </source>
</reference>
<comment type="function">
    <text evidence="1">Cysteine desulfurases mobilize the sulfur from L-cysteine to yield L-alanine, an essential step in sulfur metabolism for biosynthesis of a variety of sulfur-containing biomolecules. Component of the suf operon, which is activated and required under specific conditions such as oxidative stress and iron limitation. Acts as a potent selenocysteine lyase in vitro, that mobilizes selenium from L-selenocysteine. Selenocysteine lyase activity is however unsure in vivo.</text>
</comment>
<comment type="catalytic activity">
    <reaction evidence="1">
        <text>(sulfur carrier)-H + L-cysteine = (sulfur carrier)-SH + L-alanine</text>
        <dbReference type="Rhea" id="RHEA:43892"/>
        <dbReference type="Rhea" id="RHEA-COMP:14737"/>
        <dbReference type="Rhea" id="RHEA-COMP:14739"/>
        <dbReference type="ChEBI" id="CHEBI:29917"/>
        <dbReference type="ChEBI" id="CHEBI:35235"/>
        <dbReference type="ChEBI" id="CHEBI:57972"/>
        <dbReference type="ChEBI" id="CHEBI:64428"/>
        <dbReference type="EC" id="2.8.1.7"/>
    </reaction>
</comment>
<comment type="catalytic activity">
    <reaction evidence="1">
        <text>L-selenocysteine + AH2 = hydrogenselenide + L-alanine + A + H(+)</text>
        <dbReference type="Rhea" id="RHEA:11632"/>
        <dbReference type="ChEBI" id="CHEBI:13193"/>
        <dbReference type="ChEBI" id="CHEBI:15378"/>
        <dbReference type="ChEBI" id="CHEBI:17499"/>
        <dbReference type="ChEBI" id="CHEBI:29317"/>
        <dbReference type="ChEBI" id="CHEBI:57843"/>
        <dbReference type="ChEBI" id="CHEBI:57972"/>
        <dbReference type="EC" id="4.4.1.16"/>
    </reaction>
</comment>
<comment type="cofactor">
    <cofactor evidence="1">
        <name>pyridoxal 5'-phosphate</name>
        <dbReference type="ChEBI" id="CHEBI:597326"/>
    </cofactor>
</comment>
<comment type="pathway">
    <text evidence="1">Cofactor biosynthesis; iron-sulfur cluster biosynthesis.</text>
</comment>
<comment type="subunit">
    <text evidence="1">Homodimer. Interacts with SufE and the SufBCD complex composed of SufB, SufC and SufD. The interaction with SufE is required to mediate the direct transfer of the sulfur atom from the S-sulfanylcysteine.</text>
</comment>
<comment type="subcellular location">
    <subcellularLocation>
        <location evidence="1">Cytoplasm</location>
    </subcellularLocation>
</comment>
<comment type="similarity">
    <text evidence="1">Belongs to the class-V pyridoxal-phosphate-dependent aminotransferase family. Csd subfamily.</text>
</comment>
<protein>
    <recommendedName>
        <fullName evidence="1">Cysteine desulfurase</fullName>
        <ecNumber evidence="1">2.8.1.7</ecNumber>
    </recommendedName>
    <alternativeName>
        <fullName evidence="1">Selenocysteine beta-lyase</fullName>
        <shortName evidence="1">SCL</shortName>
    </alternativeName>
    <alternativeName>
        <fullName evidence="1">Selenocysteine lyase</fullName>
        <ecNumber evidence="1">4.4.1.16</ecNumber>
    </alternativeName>
    <alternativeName>
        <fullName evidence="1">Selenocysteine reductase</fullName>
    </alternativeName>
</protein>
<sequence length="406" mass="44318">MTFSVDKVRADFPVLSREVNGLPLAYLDSAASAQKPSQVIDAEAEFYRHGYAAVHRGIHTLSAQATEKMENVRKRASLFINARSAEELVFVRGTTEGINLVANSWGNSNVRAGDNIIISQMEHHANIVPWQMLCARVGAELRVIPLNPDGTLQLETLPTLFDEKTRLLAITHVSNVLGTENPLAEMITLAHQHGAKVLVDGAQAVMHHPVDVQALDCDFYVFSGHKLYGPTGIGILYVKEALLQEMPPWEGGGSMIATVSLSEGTTWTKAPWRFEAGTPNTGGIIGLGAALEYVSALGLNNIAEYEQNLMHYALSQLAAVPDLTLYGPPDRLGVIAFNLGKHHAYDVGSFLDNYGIAVRTGHHCAMPLMAYYNVPAMCRASLAMYNTHEEVDRLVTGLQRIHRLLG</sequence>
<feature type="chain" id="PRO_1000188291" description="Cysteine desulfurase">
    <location>
        <begin position="1"/>
        <end position="406"/>
    </location>
</feature>
<feature type="active site" description="Cysteine persulfide intermediate" evidence="1">
    <location>
        <position position="364"/>
    </location>
</feature>
<feature type="modified residue" description="N6-(pyridoxal phosphate)lysine" evidence="1">
    <location>
        <position position="226"/>
    </location>
</feature>
<keyword id="KW-0963">Cytoplasm</keyword>
<keyword id="KW-0456">Lyase</keyword>
<keyword id="KW-0663">Pyridoxal phosphate</keyword>
<keyword id="KW-1185">Reference proteome</keyword>
<keyword id="KW-0808">Transferase</keyword>
<organism>
    <name type="scientific">Escherichia coli O127:H6 (strain E2348/69 / EPEC)</name>
    <dbReference type="NCBI Taxonomy" id="574521"/>
    <lineage>
        <taxon>Bacteria</taxon>
        <taxon>Pseudomonadati</taxon>
        <taxon>Pseudomonadota</taxon>
        <taxon>Gammaproteobacteria</taxon>
        <taxon>Enterobacterales</taxon>
        <taxon>Enterobacteriaceae</taxon>
        <taxon>Escherichia</taxon>
    </lineage>
</organism>
<gene>
    <name evidence="1" type="primary">sufS</name>
    <name type="ordered locus">E2348C_1765</name>
</gene>
<evidence type="ECO:0000255" key="1">
    <source>
        <dbReference type="HAMAP-Rule" id="MF_01831"/>
    </source>
</evidence>
<accession>B7US19</accession>